<proteinExistence type="inferred from homology"/>
<comment type="function">
    <text evidence="1">Specifically methylates the adenine in position 1618 of 23S rRNA.</text>
</comment>
<comment type="catalytic activity">
    <reaction evidence="1">
        <text>adenosine(1618) in 23S rRNA + S-adenosyl-L-methionine = N(6)-methyladenosine(1618) in 23S rRNA + S-adenosyl-L-homocysteine + H(+)</text>
        <dbReference type="Rhea" id="RHEA:16497"/>
        <dbReference type="Rhea" id="RHEA-COMP:10229"/>
        <dbReference type="Rhea" id="RHEA-COMP:10231"/>
        <dbReference type="ChEBI" id="CHEBI:15378"/>
        <dbReference type="ChEBI" id="CHEBI:57856"/>
        <dbReference type="ChEBI" id="CHEBI:59789"/>
        <dbReference type="ChEBI" id="CHEBI:74411"/>
        <dbReference type="ChEBI" id="CHEBI:74449"/>
        <dbReference type="EC" id="2.1.1.181"/>
    </reaction>
</comment>
<comment type="subcellular location">
    <subcellularLocation>
        <location evidence="1">Cytoplasm</location>
    </subcellularLocation>
</comment>
<comment type="similarity">
    <text evidence="1">Belongs to the methyltransferase superfamily. METTL16/RlmF family.</text>
</comment>
<gene>
    <name evidence="1" type="primary">rlmF</name>
    <name type="ordered locus">Pput_1014</name>
</gene>
<protein>
    <recommendedName>
        <fullName evidence="1">Ribosomal RNA large subunit methyltransferase F</fullName>
        <ecNumber evidence="1">2.1.1.181</ecNumber>
    </recommendedName>
    <alternativeName>
        <fullName evidence="1">23S rRNA mA1618 methyltransferase</fullName>
    </alternativeName>
    <alternativeName>
        <fullName evidence="1">rRNA adenine N-6-methyltransferase</fullName>
    </alternativeName>
</protein>
<accession>A5VZ65</accession>
<reference key="1">
    <citation type="submission" date="2007-05" db="EMBL/GenBank/DDBJ databases">
        <title>Complete sequence of Pseudomonas putida F1.</title>
        <authorList>
            <consortium name="US DOE Joint Genome Institute"/>
            <person name="Copeland A."/>
            <person name="Lucas S."/>
            <person name="Lapidus A."/>
            <person name="Barry K."/>
            <person name="Detter J.C."/>
            <person name="Glavina del Rio T."/>
            <person name="Hammon N."/>
            <person name="Israni S."/>
            <person name="Dalin E."/>
            <person name="Tice H."/>
            <person name="Pitluck S."/>
            <person name="Chain P."/>
            <person name="Malfatti S."/>
            <person name="Shin M."/>
            <person name="Vergez L."/>
            <person name="Schmutz J."/>
            <person name="Larimer F."/>
            <person name="Land M."/>
            <person name="Hauser L."/>
            <person name="Kyrpides N."/>
            <person name="Lykidis A."/>
            <person name="Parales R."/>
            <person name="Richardson P."/>
        </authorList>
    </citation>
    <scope>NUCLEOTIDE SEQUENCE [LARGE SCALE GENOMIC DNA]</scope>
    <source>
        <strain>ATCC 700007 / DSM 6899 / JCM 31910 / BCRC 17059 / LMG 24140 / F1</strain>
    </source>
</reference>
<organism>
    <name type="scientific">Pseudomonas putida (strain ATCC 700007 / DSM 6899 / JCM 31910 / BCRC 17059 / LMG 24140 / F1)</name>
    <dbReference type="NCBI Taxonomy" id="351746"/>
    <lineage>
        <taxon>Bacteria</taxon>
        <taxon>Pseudomonadati</taxon>
        <taxon>Pseudomonadota</taxon>
        <taxon>Gammaproteobacteria</taxon>
        <taxon>Pseudomonadales</taxon>
        <taxon>Pseudomonadaceae</taxon>
        <taxon>Pseudomonas</taxon>
    </lineage>
</organism>
<sequence length="317" mass="35201">MTPNKPTLHPRNRHQGRYDFPSLIKAHPDLARFTITNPHGKPSIDFANPEAVRVFNRALLKAQYGIQHWDIPADYLCPPIPGRADYIHVAADLLADDNAGDVPRGTQVRALDVGVGANCIYPLLGHSDYRWRFLGSDIDPVALASAKAIVQANGLGKAITLRQQANRAHILSGLLQEGERFDLTLCNPPFHASRDEATRGSQRKWKNLGKQDPKRKLPVLNFGGQNNELWCEGGEIRFVTQLIGESVQYAERVLWFTSLVSKASNLPGIEAALKKSGAKAVRIIEMGQGQKQSRMVAWSFHDDAARQAWHAQRKSQA</sequence>
<dbReference type="EC" id="2.1.1.181" evidence="1"/>
<dbReference type="EMBL" id="CP000712">
    <property type="protein sequence ID" value="ABQ77175.1"/>
    <property type="molecule type" value="Genomic_DNA"/>
</dbReference>
<dbReference type="SMR" id="A5VZ65"/>
<dbReference type="KEGG" id="ppf:Pput_1014"/>
<dbReference type="eggNOG" id="COG3129">
    <property type="taxonomic scope" value="Bacteria"/>
</dbReference>
<dbReference type="HOGENOM" id="CLU_027534_3_0_6"/>
<dbReference type="GO" id="GO:0005737">
    <property type="term" value="C:cytoplasm"/>
    <property type="evidence" value="ECO:0007669"/>
    <property type="project" value="UniProtKB-SubCell"/>
</dbReference>
<dbReference type="GO" id="GO:0052907">
    <property type="term" value="F:23S rRNA (adenine(1618)-N(6))-methyltransferase activity"/>
    <property type="evidence" value="ECO:0007669"/>
    <property type="project" value="UniProtKB-EC"/>
</dbReference>
<dbReference type="GO" id="GO:0070475">
    <property type="term" value="P:rRNA base methylation"/>
    <property type="evidence" value="ECO:0007669"/>
    <property type="project" value="TreeGrafter"/>
</dbReference>
<dbReference type="CDD" id="cd02440">
    <property type="entry name" value="AdoMet_MTases"/>
    <property type="match status" value="1"/>
</dbReference>
<dbReference type="Gene3D" id="3.40.50.150">
    <property type="entry name" value="Vaccinia Virus protein VP39"/>
    <property type="match status" value="1"/>
</dbReference>
<dbReference type="HAMAP" id="MF_01848">
    <property type="entry name" value="23SrRNA_methyltr_F"/>
    <property type="match status" value="1"/>
</dbReference>
<dbReference type="InterPro" id="IPR010286">
    <property type="entry name" value="METTL16/RlmF"/>
</dbReference>
<dbReference type="InterPro" id="IPR016909">
    <property type="entry name" value="rRNA_lsu_MeTfrase_F"/>
</dbReference>
<dbReference type="InterPro" id="IPR029063">
    <property type="entry name" value="SAM-dependent_MTases_sf"/>
</dbReference>
<dbReference type="NCBIfam" id="NF008725">
    <property type="entry name" value="PRK11727.1"/>
    <property type="match status" value="1"/>
</dbReference>
<dbReference type="PANTHER" id="PTHR13393:SF0">
    <property type="entry name" value="RNA N6-ADENOSINE-METHYLTRANSFERASE METTL16"/>
    <property type="match status" value="1"/>
</dbReference>
<dbReference type="PANTHER" id="PTHR13393">
    <property type="entry name" value="SAM-DEPENDENT METHYLTRANSFERASE"/>
    <property type="match status" value="1"/>
</dbReference>
<dbReference type="Pfam" id="PF05971">
    <property type="entry name" value="Methyltransf_10"/>
    <property type="match status" value="1"/>
</dbReference>
<dbReference type="PIRSF" id="PIRSF029038">
    <property type="entry name" value="Mtase_YbiN_prd"/>
    <property type="match status" value="1"/>
</dbReference>
<dbReference type="SUPFAM" id="SSF53335">
    <property type="entry name" value="S-adenosyl-L-methionine-dependent methyltransferases"/>
    <property type="match status" value="1"/>
</dbReference>
<evidence type="ECO:0000255" key="1">
    <source>
        <dbReference type="HAMAP-Rule" id="MF_01848"/>
    </source>
</evidence>
<feature type="chain" id="PRO_0000349932" description="Ribosomal RNA large subunit methyltransferase F">
    <location>
        <begin position="1"/>
        <end position="317"/>
    </location>
</feature>
<name>RLMF_PSEP1</name>
<keyword id="KW-0963">Cytoplasm</keyword>
<keyword id="KW-0489">Methyltransferase</keyword>
<keyword id="KW-0698">rRNA processing</keyword>
<keyword id="KW-0949">S-adenosyl-L-methionine</keyword>
<keyword id="KW-0808">Transferase</keyword>